<accession>P0CO12</accession>
<accession>Q55XQ2</accession>
<accession>Q5KM87</accession>
<evidence type="ECO:0000250" key="1"/>
<evidence type="ECO:0000256" key="2">
    <source>
        <dbReference type="SAM" id="MobiDB-lite"/>
    </source>
</evidence>
<comment type="function">
    <text evidence="1">Component of the cleavage factor IA (CFIA) complex, which is involved in the endonucleolytic cleavage during polyadenylation-dependent pre-mRNA 3'-end formation.</text>
</comment>
<comment type="subcellular location">
    <subcellularLocation>
        <location evidence="1">Nucleus</location>
    </subcellularLocation>
    <subcellularLocation>
        <location evidence="1">Cytoplasm</location>
    </subcellularLocation>
    <text evidence="1">Nucleus and/or cytoplasm.</text>
</comment>
<organism>
    <name type="scientific">Cryptococcus neoformans var. neoformans serotype D (strain JEC21 / ATCC MYA-565)</name>
    <name type="common">Filobasidiella neoformans</name>
    <dbReference type="NCBI Taxonomy" id="214684"/>
    <lineage>
        <taxon>Eukaryota</taxon>
        <taxon>Fungi</taxon>
        <taxon>Dikarya</taxon>
        <taxon>Basidiomycota</taxon>
        <taxon>Agaricomycotina</taxon>
        <taxon>Tremellomycetes</taxon>
        <taxon>Tremellales</taxon>
        <taxon>Cryptococcaceae</taxon>
        <taxon>Cryptococcus</taxon>
        <taxon>Cryptococcus neoformans species complex</taxon>
    </lineage>
</organism>
<reference key="1">
    <citation type="journal article" date="2005" name="Science">
        <title>The genome of the basidiomycetous yeast and human pathogen Cryptococcus neoformans.</title>
        <authorList>
            <person name="Loftus B.J."/>
            <person name="Fung E."/>
            <person name="Roncaglia P."/>
            <person name="Rowley D."/>
            <person name="Amedeo P."/>
            <person name="Bruno D."/>
            <person name="Vamathevan J."/>
            <person name="Miranda M."/>
            <person name="Anderson I.J."/>
            <person name="Fraser J.A."/>
            <person name="Allen J.E."/>
            <person name="Bosdet I.E."/>
            <person name="Brent M.R."/>
            <person name="Chiu R."/>
            <person name="Doering T.L."/>
            <person name="Donlin M.J."/>
            <person name="D'Souza C.A."/>
            <person name="Fox D.S."/>
            <person name="Grinberg V."/>
            <person name="Fu J."/>
            <person name="Fukushima M."/>
            <person name="Haas B.J."/>
            <person name="Huang J.C."/>
            <person name="Janbon G."/>
            <person name="Jones S.J.M."/>
            <person name="Koo H.L."/>
            <person name="Krzywinski M.I."/>
            <person name="Kwon-Chung K.J."/>
            <person name="Lengeler K.B."/>
            <person name="Maiti R."/>
            <person name="Marra M.A."/>
            <person name="Marra R.E."/>
            <person name="Mathewson C.A."/>
            <person name="Mitchell T.G."/>
            <person name="Pertea M."/>
            <person name="Riggs F.R."/>
            <person name="Salzberg S.L."/>
            <person name="Schein J.E."/>
            <person name="Shvartsbeyn A."/>
            <person name="Shin H."/>
            <person name="Shumway M."/>
            <person name="Specht C.A."/>
            <person name="Suh B.B."/>
            <person name="Tenney A."/>
            <person name="Utterback T.R."/>
            <person name="Wickes B.L."/>
            <person name="Wortman J.R."/>
            <person name="Wye N.H."/>
            <person name="Kronstad J.W."/>
            <person name="Lodge J.K."/>
            <person name="Heitman J."/>
            <person name="Davis R.W."/>
            <person name="Fraser C.M."/>
            <person name="Hyman R.W."/>
        </authorList>
    </citation>
    <scope>NUCLEOTIDE SEQUENCE [LARGE SCALE GENOMIC DNA]</scope>
    <source>
        <strain>JEC21 / ATCC MYA-565</strain>
    </source>
</reference>
<sequence>MSHEHPAEIVHQLQSIDSIQQDLADTAAAVVDAASQSLPPQHAAQDQKSHSTLLDNAEAMESILESAIPAAPGSSSTAAASDAIGDNNFTASGPPPISNTVVAPSAADDETGDVIVVESETPTTTNVVEAVVNPENDGDVPIESTEQSSGQPAEQPTEQPTEQPTEQPAEQPAVETPQAPQSTPAAPAASAVESIPTTLEETHLEQIVQAPAPTVHTEPLTPVVDIKMEEKPMIEHVAWIPPQGIHSDVFLPEGLTEYSPSVSQNGELIRSWRADPSNPTLLLSLFNWAVQKTEVEDARAWYRVLAVDNPTAAQPLLALINLELALSNFAEVEAIFASTLKGSAGITTAADVSIWAAYLHYIRRQNPLTEGSANAADVRSTITEAYEFALRECGFDRESGDIWDEYIKFVASGPATNQWDTQAKNDNLRKIYQRAVCIPLNNIEALWKSYDNFESSLNKLTAKKYLAEKSPAYMTARTALRELRALSDPIPKPILPPYPTFTEQDRQVVGAWKACLRWEEGNPLVIENHELLQSRIGYALRKCLGEMRHFPELWHYAASYYSKLGKQDEAAEILEAGVNACPKSFLLTFAYAELQEERKAFPTCHSLYTTLISKLNPEVDELRQNVAREIDIARGPPIPGSEKAAVAAAVGDSIDADGNDISDIQRLVEEREQRGALVAQRRGKDIEELMVGISVVWIMYMRFARRAEGIKAARGVFGKARKSPHLTWQVFEASALMEYHTNKDAAVAIRIFELGLKQFSEDVDYVIKYLQFLLSINDDNNARALFERSVVRIMGDKARPLWDAWARYEYTYGDLSAVHKLEARMSEVFPEDAPLKRFAQRWSYNGIDQIAIRDLGFNRARMGVAAPPAFAIAPVLPPVHASIPAPIAVPTPVQPPQESYKRPAPEDIPPRRPSSAEFSRSPKRHRAQSPPRRYPERDDRPPPGRYRDSLPPVKAPSSIPPPPLAGPAYATPSSGAYGGDKDRSGLEKPLAWFMAQLPNARSFDGPVFRPDDIMKLFGGLSLPGAGMPPAPPISRGPPPPPMQSRGYYEPERDRRYGGHGSGRY</sequence>
<name>RNA14_CRYNJ</name>
<dbReference type="EMBL" id="AE017342">
    <property type="protein sequence ID" value="AAW41872.1"/>
    <property type="molecule type" value="Genomic_DNA"/>
</dbReference>
<dbReference type="RefSeq" id="XP_569179.1">
    <property type="nucleotide sequence ID" value="XM_569179.1"/>
</dbReference>
<dbReference type="SMR" id="P0CO12"/>
<dbReference type="FunCoup" id="P0CO12">
    <property type="interactions" value="821"/>
</dbReference>
<dbReference type="STRING" id="214684.P0CO12"/>
<dbReference type="PaxDb" id="214684-P0CO12"/>
<dbReference type="EnsemblFungi" id="AAW41872">
    <property type="protein sequence ID" value="AAW41872"/>
    <property type="gene ID" value="CNB02560"/>
</dbReference>
<dbReference type="GeneID" id="3255985"/>
<dbReference type="KEGG" id="cne:CNB02560"/>
<dbReference type="VEuPathDB" id="FungiDB:CNB02560"/>
<dbReference type="eggNOG" id="KOG1914">
    <property type="taxonomic scope" value="Eukaryota"/>
</dbReference>
<dbReference type="HOGENOM" id="CLU_007630_0_0_1"/>
<dbReference type="InParanoid" id="P0CO12"/>
<dbReference type="OMA" id="VQLWSVY"/>
<dbReference type="OrthoDB" id="26282at2759"/>
<dbReference type="Proteomes" id="UP000002149">
    <property type="component" value="Chromosome 2"/>
</dbReference>
<dbReference type="GO" id="GO:0005737">
    <property type="term" value="C:cytoplasm"/>
    <property type="evidence" value="ECO:0007669"/>
    <property type="project" value="UniProtKB-SubCell"/>
</dbReference>
<dbReference type="GO" id="GO:0005634">
    <property type="term" value="C:nucleus"/>
    <property type="evidence" value="ECO:0000318"/>
    <property type="project" value="GO_Central"/>
</dbReference>
<dbReference type="GO" id="GO:0003729">
    <property type="term" value="F:mRNA binding"/>
    <property type="evidence" value="ECO:0000318"/>
    <property type="project" value="GO_Central"/>
</dbReference>
<dbReference type="GO" id="GO:0031124">
    <property type="term" value="P:mRNA 3'-end processing"/>
    <property type="evidence" value="ECO:0007669"/>
    <property type="project" value="InterPro"/>
</dbReference>
<dbReference type="GO" id="GO:0031123">
    <property type="term" value="P:RNA 3'-end processing"/>
    <property type="evidence" value="ECO:0000318"/>
    <property type="project" value="GO_Central"/>
</dbReference>
<dbReference type="FunFam" id="1.25.40.1040:FF:000011">
    <property type="entry name" value="Related to RNA14-component of pre-mRNA 3`-end processing factor CF I"/>
    <property type="match status" value="1"/>
</dbReference>
<dbReference type="Gene3D" id="1.25.40.1040">
    <property type="match status" value="2"/>
</dbReference>
<dbReference type="InterPro" id="IPR003107">
    <property type="entry name" value="HAT"/>
</dbReference>
<dbReference type="InterPro" id="IPR045243">
    <property type="entry name" value="Rna14-like"/>
</dbReference>
<dbReference type="InterPro" id="IPR008847">
    <property type="entry name" value="Suf"/>
</dbReference>
<dbReference type="InterPro" id="IPR011990">
    <property type="entry name" value="TPR-like_helical_dom_sf"/>
</dbReference>
<dbReference type="PANTHER" id="PTHR19980:SF0">
    <property type="entry name" value="CLEAVAGE STIMULATION FACTOR SUBUNIT 3"/>
    <property type="match status" value="1"/>
</dbReference>
<dbReference type="PANTHER" id="PTHR19980">
    <property type="entry name" value="RNA CLEAVAGE STIMULATION FACTOR"/>
    <property type="match status" value="1"/>
</dbReference>
<dbReference type="Pfam" id="PF05843">
    <property type="entry name" value="Suf"/>
    <property type="match status" value="1"/>
</dbReference>
<dbReference type="SMART" id="SM00386">
    <property type="entry name" value="HAT"/>
    <property type="match status" value="6"/>
</dbReference>
<dbReference type="SUPFAM" id="SSF48452">
    <property type="entry name" value="TPR-like"/>
    <property type="match status" value="2"/>
</dbReference>
<protein>
    <recommendedName>
        <fullName>mRNA 3'-end-processing protein RNA14</fullName>
    </recommendedName>
</protein>
<proteinExistence type="inferred from homology"/>
<feature type="chain" id="PRO_0000238522" description="mRNA 3'-end-processing protein RNA14">
    <location>
        <begin position="1"/>
        <end position="1064"/>
    </location>
</feature>
<feature type="repeat" description="HAT 1">
    <location>
        <begin position="327"/>
        <end position="364"/>
    </location>
</feature>
<feature type="repeat" description="HAT 2">
    <location>
        <begin position="377"/>
        <end position="412"/>
    </location>
</feature>
<feature type="repeat" description="HAT 3">
    <location>
        <begin position="423"/>
        <end position="456"/>
    </location>
</feature>
<feature type="repeat" description="HAT 4">
    <location>
        <begin position="673"/>
        <end position="706"/>
    </location>
</feature>
<feature type="repeat" description="HAT 5">
    <location>
        <begin position="777"/>
        <end position="811"/>
    </location>
</feature>
<feature type="region of interest" description="Disordered" evidence="2">
    <location>
        <begin position="34"/>
        <end position="106"/>
    </location>
</feature>
<feature type="region of interest" description="Disordered" evidence="2">
    <location>
        <begin position="119"/>
        <end position="192"/>
    </location>
</feature>
<feature type="region of interest" description="Disordered" evidence="2">
    <location>
        <begin position="888"/>
        <end position="985"/>
    </location>
</feature>
<feature type="region of interest" description="Disordered" evidence="2">
    <location>
        <begin position="1022"/>
        <end position="1064"/>
    </location>
</feature>
<feature type="compositionally biased region" description="Polar residues" evidence="2">
    <location>
        <begin position="44"/>
        <end position="54"/>
    </location>
</feature>
<feature type="compositionally biased region" description="Low complexity" evidence="2">
    <location>
        <begin position="66"/>
        <end position="86"/>
    </location>
</feature>
<feature type="compositionally biased region" description="Low complexity" evidence="2">
    <location>
        <begin position="151"/>
        <end position="191"/>
    </location>
</feature>
<feature type="compositionally biased region" description="Basic and acidic residues" evidence="2">
    <location>
        <begin position="899"/>
        <end position="910"/>
    </location>
</feature>
<feature type="compositionally biased region" description="Basic and acidic residues" evidence="2">
    <location>
        <begin position="933"/>
        <end position="948"/>
    </location>
</feature>
<feature type="compositionally biased region" description="Pro residues" evidence="2">
    <location>
        <begin position="1026"/>
        <end position="1042"/>
    </location>
</feature>
<keyword id="KW-0963">Cytoplasm</keyword>
<keyword id="KW-0507">mRNA processing</keyword>
<keyword id="KW-0539">Nucleus</keyword>
<keyword id="KW-1185">Reference proteome</keyword>
<keyword id="KW-0677">Repeat</keyword>
<gene>
    <name type="primary">RNA14</name>
    <name type="ordered locus">CNB02560</name>
</gene>